<proteinExistence type="evidence at protein level"/>
<organism>
    <name type="scientific">Spinacia oleracea</name>
    <name type="common">Spinach</name>
    <dbReference type="NCBI Taxonomy" id="3562"/>
    <lineage>
        <taxon>Eukaryota</taxon>
        <taxon>Viridiplantae</taxon>
        <taxon>Streptophyta</taxon>
        <taxon>Embryophyta</taxon>
        <taxon>Tracheophyta</taxon>
        <taxon>Spermatophyta</taxon>
        <taxon>Magnoliopsida</taxon>
        <taxon>eudicotyledons</taxon>
        <taxon>Gunneridae</taxon>
        <taxon>Pentapetalae</taxon>
        <taxon>Caryophyllales</taxon>
        <taxon>Chenopodiaceae</taxon>
        <taxon>Chenopodioideae</taxon>
        <taxon>Anserineae</taxon>
        <taxon>Spinacia</taxon>
    </lineage>
</organism>
<evidence type="ECO:0000255" key="1">
    <source>
        <dbReference type="HAMAP-Rule" id="MF_00642"/>
    </source>
</evidence>
<evidence type="ECO:0000269" key="2">
    <source>
    </source>
</evidence>
<evidence type="ECO:0000269" key="3">
    <source>
    </source>
</evidence>
<evidence type="ECO:0000269" key="4">
    <source>
    </source>
</evidence>
<evidence type="ECO:0007829" key="5">
    <source>
        <dbReference type="PDB" id="3JCU"/>
    </source>
</evidence>
<name>PSBE_SPIOL</name>
<accession>P69383</accession>
<accession>P09197</accession>
<sequence length="83" mass="9387">MSGSTGERSFADIITSIRYWVIHSITIPSLFIAGWLFVSTGLAYDVFGSPRPNEYFTESRQGIPLITGRFDSLEQLDEFSRSF</sequence>
<comment type="function">
    <text evidence="1">This b-type cytochrome is tightly associated with the reaction center of photosystem II (PSII). PSII is a light-driven water:plastoquinone oxidoreductase that uses light energy to abstract electrons from H(2)O, generating O(2) and a proton gradient subsequently used for ATP formation. It consists of a core antenna complex that captures photons, and an electron transfer chain that converts photonic excitation into a charge separation.</text>
</comment>
<comment type="cofactor">
    <cofactor evidence="1">
        <name>heme b</name>
        <dbReference type="ChEBI" id="CHEBI:60344"/>
    </cofactor>
    <text evidence="1">With its partner (PsbF) binds heme. PSII binds additional chlorophylls, carotenoids and specific lipids.</text>
</comment>
<comment type="subunit">
    <text evidence="1">Heterodimer of an alpha subunit and a beta subunit. PSII is composed of 1 copy each of membrane proteins PsbA, PsbB, PsbC, PsbD, PsbE, PsbF, PsbH, PsbI, PsbJ, PsbK, PsbL, PsbM, PsbT, PsbX, PsbY, PsbZ, Psb30/Ycf12, at least 3 peripheral proteins of the oxygen-evolving complex and a large number of cofactors. It forms dimeric complexes.</text>
</comment>
<comment type="subcellular location">
    <subcellularLocation>
        <location evidence="1">Plastid</location>
        <location evidence="1">Chloroplast thylakoid membrane</location>
        <topology evidence="1">Single-pass membrane protein</topology>
    </subcellularLocation>
</comment>
<comment type="mass spectrometry" mass="9255.1" method="MALDI" evidence="4"/>
<comment type="similarity">
    <text evidence="1">Belongs to the PsbE/PsbF family.</text>
</comment>
<feature type="initiator methionine" description="Removed" evidence="2 3 4">
    <location>
        <position position="1"/>
    </location>
</feature>
<feature type="chain" id="PRO_0000200339" description="Cytochrome b559 subunit alpha">
    <location>
        <begin position="2"/>
        <end position="83"/>
    </location>
</feature>
<feature type="transmembrane region" description="Helical" evidence="1">
    <location>
        <begin position="21"/>
        <end position="35"/>
    </location>
</feature>
<feature type="binding site" description="axial binding residue" evidence="1">
    <location>
        <position position="23"/>
    </location>
    <ligand>
        <name>heme</name>
        <dbReference type="ChEBI" id="CHEBI:30413"/>
        <note>ligand shared with beta subunit</note>
    </ligand>
    <ligandPart>
        <name>Fe</name>
        <dbReference type="ChEBI" id="CHEBI:18248"/>
    </ligandPart>
</feature>
<feature type="helix" evidence="5">
    <location>
        <begin position="10"/>
        <end position="15"/>
    </location>
</feature>
<feature type="helix" evidence="5">
    <location>
        <begin position="17"/>
        <end position="39"/>
    </location>
</feature>
<feature type="helix" evidence="5">
    <location>
        <begin position="42"/>
        <end position="47"/>
    </location>
</feature>
<feature type="helix" evidence="5">
    <location>
        <begin position="52"/>
        <end position="55"/>
    </location>
</feature>
<feature type="strand" evidence="5">
    <location>
        <begin position="69"/>
        <end position="71"/>
    </location>
</feature>
<feature type="helix" evidence="5">
    <location>
        <begin position="72"/>
        <end position="81"/>
    </location>
</feature>
<geneLocation type="chloroplast"/>
<dbReference type="EMBL" id="M35673">
    <property type="protein sequence ID" value="AAA84628.1"/>
    <property type="molecule type" value="Genomic_DNA"/>
</dbReference>
<dbReference type="EMBL" id="AJ400848">
    <property type="protein sequence ID" value="CAB88745.1"/>
    <property type="molecule type" value="Genomic_DNA"/>
</dbReference>
<dbReference type="PIR" id="S00418">
    <property type="entry name" value="S00418"/>
</dbReference>
<dbReference type="RefSeq" id="NP_054952.1">
    <property type="nucleotide sequence ID" value="NC_002202.1"/>
</dbReference>
<dbReference type="PDB" id="3JCU">
    <property type="method" value="EM"/>
    <property type="resolution" value="3.20 A"/>
    <property type="chains" value="E/e=1-83"/>
</dbReference>
<dbReference type="PDB" id="8Z9D">
    <property type="method" value="EM"/>
    <property type="resolution" value="3.22 A"/>
    <property type="chains" value="E/EE/Ee/e=1-83"/>
</dbReference>
<dbReference type="PDBsum" id="3JCU"/>
<dbReference type="PDBsum" id="8Z9D"/>
<dbReference type="EMDB" id="EMD-39860"/>
<dbReference type="SMR" id="P69383"/>
<dbReference type="DIP" id="DIP-62011N"/>
<dbReference type="FunCoup" id="P69383">
    <property type="interactions" value="22"/>
</dbReference>
<dbReference type="IntAct" id="P69383">
    <property type="interactions" value="1"/>
</dbReference>
<dbReference type="STRING" id="3562.P69383"/>
<dbReference type="GeneID" id="2715611"/>
<dbReference type="KEGG" id="soe:2715611"/>
<dbReference type="InParanoid" id="P69383"/>
<dbReference type="OrthoDB" id="1839964at2759"/>
<dbReference type="Proteomes" id="UP001155700">
    <property type="component" value="Chloroplast Pltd"/>
</dbReference>
<dbReference type="GO" id="GO:0009535">
    <property type="term" value="C:chloroplast thylakoid membrane"/>
    <property type="evidence" value="ECO:0007669"/>
    <property type="project" value="UniProtKB-SubCell"/>
</dbReference>
<dbReference type="GO" id="GO:0009539">
    <property type="term" value="C:photosystem II reaction center"/>
    <property type="evidence" value="ECO:0007669"/>
    <property type="project" value="InterPro"/>
</dbReference>
<dbReference type="GO" id="GO:0009055">
    <property type="term" value="F:electron transfer activity"/>
    <property type="evidence" value="ECO:0007669"/>
    <property type="project" value="UniProtKB-UniRule"/>
</dbReference>
<dbReference type="GO" id="GO:0020037">
    <property type="term" value="F:heme binding"/>
    <property type="evidence" value="ECO:0007669"/>
    <property type="project" value="InterPro"/>
</dbReference>
<dbReference type="GO" id="GO:0005506">
    <property type="term" value="F:iron ion binding"/>
    <property type="evidence" value="ECO:0007669"/>
    <property type="project" value="UniProtKB-UniRule"/>
</dbReference>
<dbReference type="GO" id="GO:0009767">
    <property type="term" value="P:photosynthetic electron transport chain"/>
    <property type="evidence" value="ECO:0007669"/>
    <property type="project" value="InterPro"/>
</dbReference>
<dbReference type="Gene3D" id="1.20.5.860">
    <property type="entry name" value="Photosystem II cytochrome b559, alpha subunit"/>
    <property type="match status" value="1"/>
</dbReference>
<dbReference type="HAMAP" id="MF_00642">
    <property type="entry name" value="PSII_PsbE"/>
    <property type="match status" value="1"/>
</dbReference>
<dbReference type="InterPro" id="IPR006217">
    <property type="entry name" value="PSII_cyt_b559_asu"/>
</dbReference>
<dbReference type="InterPro" id="IPR037025">
    <property type="entry name" value="PSII_cyt_b559_asu_sf"/>
</dbReference>
<dbReference type="InterPro" id="IPR006216">
    <property type="entry name" value="PSII_cyt_b559_CS"/>
</dbReference>
<dbReference type="InterPro" id="IPR013081">
    <property type="entry name" value="PSII_cyt_b559_N"/>
</dbReference>
<dbReference type="InterPro" id="IPR013082">
    <property type="entry name" value="PSII_cytb559_asu_lum"/>
</dbReference>
<dbReference type="NCBIfam" id="TIGR01332">
    <property type="entry name" value="cyt_b559_alpha"/>
    <property type="match status" value="1"/>
</dbReference>
<dbReference type="PANTHER" id="PTHR33391">
    <property type="entry name" value="CYTOCHROME B559 SUBUNIT BETA-RELATED"/>
    <property type="match status" value="1"/>
</dbReference>
<dbReference type="PANTHER" id="PTHR33391:SF9">
    <property type="entry name" value="CYTOCHROME B559 SUBUNIT BETA-RELATED"/>
    <property type="match status" value="1"/>
</dbReference>
<dbReference type="Pfam" id="PF00283">
    <property type="entry name" value="Cytochrom_B559"/>
    <property type="match status" value="1"/>
</dbReference>
<dbReference type="Pfam" id="PF00284">
    <property type="entry name" value="Cytochrom_B559a"/>
    <property type="match status" value="1"/>
</dbReference>
<dbReference type="PIRSF" id="PIRSF000036">
    <property type="entry name" value="PsbE"/>
    <property type="match status" value="1"/>
</dbReference>
<dbReference type="SUPFAM" id="SSF161045">
    <property type="entry name" value="Cytochrome b559 subunits"/>
    <property type="match status" value="1"/>
</dbReference>
<dbReference type="PROSITE" id="PS00537">
    <property type="entry name" value="CYTOCHROME_B559"/>
    <property type="match status" value="1"/>
</dbReference>
<gene>
    <name evidence="1" type="primary">psbE</name>
</gene>
<reference key="1">
    <citation type="journal article" date="1984" name="FEBS Lett.">
        <title>Nucleotide sequence of the gene for apocytochrome b-559 on the spinach plastid chromosome: implications for the structure of the membrane protein.</title>
        <authorList>
            <person name="Hermann R.G."/>
            <person name="Alt J."/>
            <person name="Schiller B."/>
            <person name="Widger W.R."/>
            <person name="Cramer W.A."/>
        </authorList>
    </citation>
    <scope>NUCLEOTIDE SEQUENCE [GENOMIC DNA]</scope>
</reference>
<reference key="2">
    <citation type="journal article" date="2001" name="Plant Mol. Biol.">
        <title>The plastid chromosome of spinach (Spinacia oleracea): complete nucleotide sequence and gene organization.</title>
        <authorList>
            <person name="Schmitz-Linneweber C."/>
            <person name="Maier R.M."/>
            <person name="Alcaraz J.-P."/>
            <person name="Cottet A."/>
            <person name="Herrmann R.G."/>
            <person name="Mache R."/>
        </authorList>
    </citation>
    <scope>NUCLEOTIDE SEQUENCE [LARGE SCALE GENOMIC DNA]</scope>
    <source>
        <strain>cv. Geant d'hiver</strain>
        <strain>cv. Monatol</strain>
    </source>
</reference>
<reference key="3">
    <citation type="journal article" date="1984" name="J. Biol. Chem.">
        <title>Purification and partial amino acid sequence of the chloroplast cytochrome b-559.</title>
        <authorList>
            <person name="Widger W.R."/>
            <person name="Cramer W.A."/>
            <person name="Hermodson M."/>
            <person name="Meyer D."/>
            <person name="Gullifor M."/>
        </authorList>
    </citation>
    <scope>PROTEIN SEQUENCE OF 2-28</scope>
</reference>
<reference key="4">
    <citation type="journal article" date="1989" name="FEBS Lett.">
        <title>N-terminal sequencing of photosystem II low-molecular-mass proteins. 5 and 4.1 kDa components of the O2-evolving core complex from higher plants.</title>
        <authorList>
            <person name="Ikeuchi M."/>
            <person name="Takio K."/>
            <person name="Inoue Y."/>
        </authorList>
    </citation>
    <scope>PROTEIN SEQUENCE OF 2-15</scope>
</reference>
<reference key="5">
    <citation type="journal article" date="1998" name="J. Biol. Chem.">
        <title>Isolation and characterization of monomeric and dimeric CP47-reaction center photosystem II complexes.</title>
        <authorList>
            <person name="Zheleva D."/>
            <person name="Sharma J."/>
            <person name="Panico M."/>
            <person name="Morris H.R."/>
            <person name="Barber J."/>
        </authorList>
    </citation>
    <scope>PROTEIN SEQUENCE OF 2-7</scope>
    <scope>MASS SPECTROMETRY</scope>
</reference>
<protein>
    <recommendedName>
        <fullName evidence="1">Cytochrome b559 subunit alpha</fullName>
    </recommendedName>
    <alternativeName>
        <fullName evidence="1">PSII reaction center subunit V</fullName>
    </alternativeName>
</protein>
<keyword id="KW-0002">3D-structure</keyword>
<keyword id="KW-0150">Chloroplast</keyword>
<keyword id="KW-0903">Direct protein sequencing</keyword>
<keyword id="KW-0249">Electron transport</keyword>
<keyword id="KW-0349">Heme</keyword>
<keyword id="KW-0408">Iron</keyword>
<keyword id="KW-0472">Membrane</keyword>
<keyword id="KW-0479">Metal-binding</keyword>
<keyword id="KW-0602">Photosynthesis</keyword>
<keyword id="KW-0604">Photosystem II</keyword>
<keyword id="KW-0934">Plastid</keyword>
<keyword id="KW-1185">Reference proteome</keyword>
<keyword id="KW-0793">Thylakoid</keyword>
<keyword id="KW-0812">Transmembrane</keyword>
<keyword id="KW-1133">Transmembrane helix</keyword>
<keyword id="KW-0813">Transport</keyword>